<evidence type="ECO:0000255" key="1">
    <source>
        <dbReference type="HAMAP-Rule" id="MF_01865"/>
    </source>
</evidence>
<evidence type="ECO:0000255" key="2">
    <source>
        <dbReference type="PROSITE-ProRule" id="PRU01266"/>
    </source>
</evidence>
<accession>O25434</accession>
<keyword id="KW-0004">4Fe-4S</keyword>
<keyword id="KW-0963">Cytoplasm</keyword>
<keyword id="KW-0408">Iron</keyword>
<keyword id="KW-0411">Iron-sulfur</keyword>
<keyword id="KW-0479">Metal-binding</keyword>
<keyword id="KW-1185">Reference proteome</keyword>
<keyword id="KW-0949">S-adenosyl-L-methionine</keyword>
<keyword id="KW-0808">Transferase</keyword>
<organism>
    <name type="scientific">Helicobacter pylori (strain ATCC 700392 / 26695)</name>
    <name type="common">Campylobacter pylori</name>
    <dbReference type="NCBI Taxonomy" id="85962"/>
    <lineage>
        <taxon>Bacteria</taxon>
        <taxon>Pseudomonadati</taxon>
        <taxon>Campylobacterota</taxon>
        <taxon>Epsilonproteobacteria</taxon>
        <taxon>Campylobacterales</taxon>
        <taxon>Helicobacteraceae</taxon>
        <taxon>Helicobacter</taxon>
    </lineage>
</organism>
<feature type="chain" id="PRO_0000374856" description="Ribosomal protein uS12 methylthiotransferase RimO">
    <location>
        <begin position="1"/>
        <end position="439"/>
    </location>
</feature>
<feature type="domain" description="MTTase N-terminal" evidence="1">
    <location>
        <begin position="7"/>
        <end position="119"/>
    </location>
</feature>
<feature type="domain" description="Radical SAM core" evidence="2">
    <location>
        <begin position="137"/>
        <end position="368"/>
    </location>
</feature>
<feature type="binding site" evidence="1">
    <location>
        <position position="16"/>
    </location>
    <ligand>
        <name>[4Fe-4S] cluster</name>
        <dbReference type="ChEBI" id="CHEBI:49883"/>
        <label>1</label>
    </ligand>
</feature>
<feature type="binding site" evidence="1">
    <location>
        <position position="50"/>
    </location>
    <ligand>
        <name>[4Fe-4S] cluster</name>
        <dbReference type="ChEBI" id="CHEBI:49883"/>
        <label>1</label>
    </ligand>
</feature>
<feature type="binding site" evidence="1">
    <location>
        <position position="82"/>
    </location>
    <ligand>
        <name>[4Fe-4S] cluster</name>
        <dbReference type="ChEBI" id="CHEBI:49883"/>
        <label>1</label>
    </ligand>
</feature>
<feature type="binding site" evidence="1">
    <location>
        <position position="151"/>
    </location>
    <ligand>
        <name>[4Fe-4S] cluster</name>
        <dbReference type="ChEBI" id="CHEBI:49883"/>
        <label>2</label>
        <note>4Fe-4S-S-AdoMet</note>
    </ligand>
</feature>
<feature type="binding site" evidence="1">
    <location>
        <position position="155"/>
    </location>
    <ligand>
        <name>[4Fe-4S] cluster</name>
        <dbReference type="ChEBI" id="CHEBI:49883"/>
        <label>2</label>
        <note>4Fe-4S-S-AdoMet</note>
    </ligand>
</feature>
<feature type="binding site" evidence="1">
    <location>
        <position position="158"/>
    </location>
    <ligand>
        <name>[4Fe-4S] cluster</name>
        <dbReference type="ChEBI" id="CHEBI:49883"/>
        <label>2</label>
        <note>4Fe-4S-S-AdoMet</note>
    </ligand>
</feature>
<reference key="1">
    <citation type="journal article" date="1997" name="Nature">
        <title>The complete genome sequence of the gastric pathogen Helicobacter pylori.</title>
        <authorList>
            <person name="Tomb J.-F."/>
            <person name="White O."/>
            <person name="Kerlavage A.R."/>
            <person name="Clayton R.A."/>
            <person name="Sutton G.G."/>
            <person name="Fleischmann R.D."/>
            <person name="Ketchum K.A."/>
            <person name="Klenk H.-P."/>
            <person name="Gill S.R."/>
            <person name="Dougherty B.A."/>
            <person name="Nelson K.E."/>
            <person name="Quackenbush J."/>
            <person name="Zhou L."/>
            <person name="Kirkness E.F."/>
            <person name="Peterson S.N."/>
            <person name="Loftus B.J."/>
            <person name="Richardson D.L."/>
            <person name="Dodson R.J."/>
            <person name="Khalak H.G."/>
            <person name="Glodek A."/>
            <person name="McKenney K."/>
            <person name="FitzGerald L.M."/>
            <person name="Lee N."/>
            <person name="Adams M.D."/>
            <person name="Hickey E.K."/>
            <person name="Berg D.E."/>
            <person name="Gocayne J.D."/>
            <person name="Utterback T.R."/>
            <person name="Peterson J.D."/>
            <person name="Kelley J.M."/>
            <person name="Cotton M.D."/>
            <person name="Weidman J.F."/>
            <person name="Fujii C."/>
            <person name="Bowman C."/>
            <person name="Watthey L."/>
            <person name="Wallin E."/>
            <person name="Hayes W.S."/>
            <person name="Borodovsky M."/>
            <person name="Karp P.D."/>
            <person name="Smith H.O."/>
            <person name="Fraser C.M."/>
            <person name="Venter J.C."/>
        </authorList>
    </citation>
    <scope>NUCLEOTIDE SEQUENCE [LARGE SCALE GENOMIC DNA]</scope>
    <source>
        <strain>ATCC 700392 / 26695</strain>
    </source>
</reference>
<name>RIMO_HELPY</name>
<proteinExistence type="inferred from homology"/>
<dbReference type="EC" id="2.8.4.4" evidence="1"/>
<dbReference type="EMBL" id="AE000511">
    <property type="protein sequence ID" value="AAD07780.1"/>
    <property type="molecule type" value="Genomic_DNA"/>
</dbReference>
<dbReference type="PIR" id="F64611">
    <property type="entry name" value="F64611"/>
</dbReference>
<dbReference type="RefSeq" id="NP_207528.1">
    <property type="nucleotide sequence ID" value="NC_000915.1"/>
</dbReference>
<dbReference type="RefSeq" id="WP_001197349.1">
    <property type="nucleotide sequence ID" value="NC_018939.1"/>
</dbReference>
<dbReference type="SMR" id="O25434"/>
<dbReference type="FunCoup" id="O25434">
    <property type="interactions" value="264"/>
</dbReference>
<dbReference type="STRING" id="85962.HP_0734"/>
<dbReference type="PaxDb" id="85962-C694_03770"/>
<dbReference type="EnsemblBacteria" id="AAD07780">
    <property type="protein sequence ID" value="AAD07780"/>
    <property type="gene ID" value="HP_0734"/>
</dbReference>
<dbReference type="KEGG" id="heo:C694_03770"/>
<dbReference type="KEGG" id="hpy:HP_0734"/>
<dbReference type="PATRIC" id="fig|85962.47.peg.782"/>
<dbReference type="eggNOG" id="COG0621">
    <property type="taxonomic scope" value="Bacteria"/>
</dbReference>
<dbReference type="InParanoid" id="O25434"/>
<dbReference type="OrthoDB" id="9805215at2"/>
<dbReference type="PhylomeDB" id="O25434"/>
<dbReference type="Proteomes" id="UP000000429">
    <property type="component" value="Chromosome"/>
</dbReference>
<dbReference type="GO" id="GO:0005829">
    <property type="term" value="C:cytosol"/>
    <property type="evidence" value="ECO:0000318"/>
    <property type="project" value="GO_Central"/>
</dbReference>
<dbReference type="GO" id="GO:0051539">
    <property type="term" value="F:4 iron, 4 sulfur cluster binding"/>
    <property type="evidence" value="ECO:0000318"/>
    <property type="project" value="GO_Central"/>
</dbReference>
<dbReference type="GO" id="GO:0035599">
    <property type="term" value="F:aspartic acid methylthiotransferase activity"/>
    <property type="evidence" value="ECO:0000318"/>
    <property type="project" value="GO_Central"/>
</dbReference>
<dbReference type="GO" id="GO:0046872">
    <property type="term" value="F:metal ion binding"/>
    <property type="evidence" value="ECO:0007669"/>
    <property type="project" value="UniProtKB-KW"/>
</dbReference>
<dbReference type="GO" id="GO:0103039">
    <property type="term" value="F:protein methylthiotransferase activity"/>
    <property type="evidence" value="ECO:0007669"/>
    <property type="project" value="UniProtKB-EC"/>
</dbReference>
<dbReference type="GO" id="GO:0006400">
    <property type="term" value="P:tRNA modification"/>
    <property type="evidence" value="ECO:0007669"/>
    <property type="project" value="InterPro"/>
</dbReference>
<dbReference type="CDD" id="cd01335">
    <property type="entry name" value="Radical_SAM"/>
    <property type="match status" value="1"/>
</dbReference>
<dbReference type="FunFam" id="3.40.50.12160:FF:000010">
    <property type="entry name" value="Ribosomal protein S12 methylthiotransferase RimO"/>
    <property type="match status" value="1"/>
</dbReference>
<dbReference type="FunFam" id="3.80.30.20:FF:000015">
    <property type="entry name" value="Ribosomal protein S12 methylthiotransferase RimO"/>
    <property type="match status" value="1"/>
</dbReference>
<dbReference type="Gene3D" id="3.40.50.12160">
    <property type="entry name" value="Methylthiotransferase, N-terminal domain"/>
    <property type="match status" value="1"/>
</dbReference>
<dbReference type="Gene3D" id="3.80.30.20">
    <property type="entry name" value="tm_1862 like domain"/>
    <property type="match status" value="1"/>
</dbReference>
<dbReference type="HAMAP" id="MF_01865">
    <property type="entry name" value="MTTase_RimO"/>
    <property type="match status" value="1"/>
</dbReference>
<dbReference type="InterPro" id="IPR006638">
    <property type="entry name" value="Elp3/MiaA/NifB-like_rSAM"/>
</dbReference>
<dbReference type="InterPro" id="IPR005839">
    <property type="entry name" value="Methylthiotransferase"/>
</dbReference>
<dbReference type="InterPro" id="IPR020612">
    <property type="entry name" value="Methylthiotransferase_CS"/>
</dbReference>
<dbReference type="InterPro" id="IPR013848">
    <property type="entry name" value="Methylthiotransferase_N"/>
</dbReference>
<dbReference type="InterPro" id="IPR038135">
    <property type="entry name" value="Methylthiotransferase_N_sf"/>
</dbReference>
<dbReference type="InterPro" id="IPR005840">
    <property type="entry name" value="Ribosomal_uS12_MeSTrfase_RimO"/>
</dbReference>
<dbReference type="InterPro" id="IPR007197">
    <property type="entry name" value="rSAM"/>
</dbReference>
<dbReference type="InterPro" id="IPR023404">
    <property type="entry name" value="rSAM_horseshoe"/>
</dbReference>
<dbReference type="NCBIfam" id="TIGR01125">
    <property type="entry name" value="30S ribosomal protein S12 methylthiotransferase RimO"/>
    <property type="match status" value="1"/>
</dbReference>
<dbReference type="NCBIfam" id="TIGR00089">
    <property type="entry name" value="MiaB/RimO family radical SAM methylthiotransferase"/>
    <property type="match status" value="1"/>
</dbReference>
<dbReference type="PANTHER" id="PTHR43837">
    <property type="entry name" value="RIBOSOMAL PROTEIN S12 METHYLTHIOTRANSFERASE RIMO"/>
    <property type="match status" value="1"/>
</dbReference>
<dbReference type="PANTHER" id="PTHR43837:SF1">
    <property type="entry name" value="RIBOSOMAL PROTEIN US12 METHYLTHIOTRANSFERASE RIMO"/>
    <property type="match status" value="1"/>
</dbReference>
<dbReference type="Pfam" id="PF04055">
    <property type="entry name" value="Radical_SAM"/>
    <property type="match status" value="1"/>
</dbReference>
<dbReference type="Pfam" id="PF00919">
    <property type="entry name" value="UPF0004"/>
    <property type="match status" value="1"/>
</dbReference>
<dbReference type="SFLD" id="SFLDG01082">
    <property type="entry name" value="B12-binding_domain_containing"/>
    <property type="match status" value="1"/>
</dbReference>
<dbReference type="SFLD" id="SFLDS00029">
    <property type="entry name" value="Radical_SAM"/>
    <property type="match status" value="1"/>
</dbReference>
<dbReference type="SFLD" id="SFLDF00274">
    <property type="entry name" value="ribosomal_protein_S12_methylth"/>
    <property type="match status" value="1"/>
</dbReference>
<dbReference type="SMART" id="SM00729">
    <property type="entry name" value="Elp3"/>
    <property type="match status" value="1"/>
</dbReference>
<dbReference type="SUPFAM" id="SSF102114">
    <property type="entry name" value="Radical SAM enzymes"/>
    <property type="match status" value="1"/>
</dbReference>
<dbReference type="PROSITE" id="PS51449">
    <property type="entry name" value="MTTASE_N"/>
    <property type="match status" value="1"/>
</dbReference>
<dbReference type="PROSITE" id="PS01278">
    <property type="entry name" value="MTTASE_RADICAL"/>
    <property type="match status" value="1"/>
</dbReference>
<dbReference type="PROSITE" id="PS51918">
    <property type="entry name" value="RADICAL_SAM"/>
    <property type="match status" value="1"/>
</dbReference>
<comment type="function">
    <text evidence="1">Catalyzes the methylthiolation of an aspartic acid residue of ribosomal protein uS12.</text>
</comment>
<comment type="catalytic activity">
    <reaction evidence="1">
        <text>L-aspartate(89)-[ribosomal protein uS12]-hydrogen + (sulfur carrier)-SH + AH2 + 2 S-adenosyl-L-methionine = 3-methylsulfanyl-L-aspartate(89)-[ribosomal protein uS12]-hydrogen + (sulfur carrier)-H + 5'-deoxyadenosine + L-methionine + A + S-adenosyl-L-homocysteine + 2 H(+)</text>
        <dbReference type="Rhea" id="RHEA:37087"/>
        <dbReference type="Rhea" id="RHEA-COMP:10460"/>
        <dbReference type="Rhea" id="RHEA-COMP:10461"/>
        <dbReference type="Rhea" id="RHEA-COMP:14737"/>
        <dbReference type="Rhea" id="RHEA-COMP:14739"/>
        <dbReference type="ChEBI" id="CHEBI:13193"/>
        <dbReference type="ChEBI" id="CHEBI:15378"/>
        <dbReference type="ChEBI" id="CHEBI:17319"/>
        <dbReference type="ChEBI" id="CHEBI:17499"/>
        <dbReference type="ChEBI" id="CHEBI:29917"/>
        <dbReference type="ChEBI" id="CHEBI:29961"/>
        <dbReference type="ChEBI" id="CHEBI:57844"/>
        <dbReference type="ChEBI" id="CHEBI:57856"/>
        <dbReference type="ChEBI" id="CHEBI:59789"/>
        <dbReference type="ChEBI" id="CHEBI:64428"/>
        <dbReference type="ChEBI" id="CHEBI:73599"/>
        <dbReference type="EC" id="2.8.4.4"/>
    </reaction>
</comment>
<comment type="cofactor">
    <cofactor evidence="1">
        <name>[4Fe-4S] cluster</name>
        <dbReference type="ChEBI" id="CHEBI:49883"/>
    </cofactor>
    <text evidence="1">Binds 2 [4Fe-4S] clusters. One cluster is coordinated with 3 cysteines and an exchangeable S-adenosyl-L-methionine.</text>
</comment>
<comment type="subcellular location">
    <subcellularLocation>
        <location evidence="1">Cytoplasm</location>
    </subcellularLocation>
</comment>
<comment type="similarity">
    <text evidence="1">Belongs to the methylthiotransferase family. RimO subfamily.</text>
</comment>
<protein>
    <recommendedName>
        <fullName evidence="1">Ribosomal protein uS12 methylthiotransferase RimO</fullName>
        <shortName evidence="1">uS12 MTTase</shortName>
        <shortName evidence="1">uS12 methylthiotransferase</shortName>
        <ecNumber evidence="1">2.8.4.4</ecNumber>
    </recommendedName>
    <alternativeName>
        <fullName evidence="1">Ribosomal protein uS12 (aspartate-C(3))-methylthiotransferase</fullName>
    </alternativeName>
    <alternativeName>
        <fullName evidence="1">Ribosome maturation factor RimO</fullName>
    </alternativeName>
</protein>
<sequence length="439" mass="49634">MQVKENKQLCLISLGCSKNLVDSEVMLGKLYNYTLTNDAKSADVILINTCGFIESAKQESIQTILNAAKDKKEGAILIASGCLSERYKDEIKELIPEVDIFTGVGDYDKIDIMIAKKQNQFSEQVFLSEHYNARIITGSSVHAYVKISEGCNQKCSFCAIPSFKGKLQSRELDSILKEVENLALKGYTDMTFIAQDSSSFLYDKGQKDGLIQLIRAIDKQQALKSARILYLYPSSTTLELIGAIESSPIFQNYFDMPIQHISDSMLKKMRRNSSQAHHLKLLDAMKQVKESFIRSTIIVGHPEENESEFEELSAFLDEFQFDRLNIFAFSAEENTHAYSLEKVPKKTINARIKALNKIALKHQNHSFKALLNKPIKALVENKEGEYFYKARDLRWAPEVDGEILINDSELTTPLKPGHYTIAPSEFKDNILLAKVLSPF</sequence>
<gene>
    <name evidence="1" type="primary">rimO</name>
    <name type="ordered locus">HP_0734</name>
</gene>